<feature type="chain" id="PRO_0000420856" description="Neutral phospholipase A2 homolog cannitoxin beta chain 2">
    <location>
        <begin position="1"/>
        <end position="40" status="greater than"/>
    </location>
</feature>
<feature type="disulfide bond" evidence="1">
    <location>
        <begin position="11"/>
        <end status="unknown"/>
    </location>
</feature>
<feature type="disulfide bond" evidence="1">
    <location>
        <begin position="27"/>
        <end status="unknown"/>
    </location>
</feature>
<feature type="disulfide bond" evidence="1">
    <location>
        <begin position="29"/>
        <end status="unknown"/>
    </location>
</feature>
<feature type="non-terminal residue">
    <location>
        <position position="40"/>
    </location>
</feature>
<name>PA2HC_OXYSA</name>
<reference key="1">
    <citation type="journal article" date="2005" name="J. Pharmacol. Exp. Ther.">
        <title>Isolation and pharmacological characterization of cannitoxin, a presynaptic neurotoxin from the venom of the Papuan Taipan (Oxyuranus scutellatus canni).</title>
        <authorList>
            <person name="Kuruppu S."/>
            <person name="Reeve S."/>
            <person name="Banerjee Y."/>
            <person name="Kini R.M."/>
            <person name="Smith A.I."/>
            <person name="Hodgson W.C."/>
        </authorList>
    </citation>
    <scope>PROTEIN SEQUENCE</scope>
    <scope>FUNCTION</scope>
    <scope>MASS SPECTROMETRY</scope>
    <source>
        <tissue>Venom</tissue>
    </source>
</reference>
<organism>
    <name type="scientific">Oxyuranus scutellatus canni</name>
    <name type="common">Papuan taipan</name>
    <dbReference type="NCBI Taxonomy" id="183720"/>
    <lineage>
        <taxon>Eukaryota</taxon>
        <taxon>Metazoa</taxon>
        <taxon>Chordata</taxon>
        <taxon>Craniata</taxon>
        <taxon>Vertebrata</taxon>
        <taxon>Euteleostomi</taxon>
        <taxon>Lepidosauria</taxon>
        <taxon>Squamata</taxon>
        <taxon>Bifurcata</taxon>
        <taxon>Unidentata</taxon>
        <taxon>Episquamata</taxon>
        <taxon>Toxicofera</taxon>
        <taxon>Serpentes</taxon>
        <taxon>Colubroidea</taxon>
        <taxon>Elapidae</taxon>
        <taxon>Hydrophiinae</taxon>
        <taxon>Oxyuranus</taxon>
    </lineage>
</organism>
<sequence>NLVQFGFMIECAIRNRQPALDFMNYGCYCGTVGRGTPVDD</sequence>
<protein>
    <recommendedName>
        <fullName>Neutral phospholipase A2 homolog cannitoxin beta chain 2</fullName>
        <shortName>svPLA2 homolog</shortName>
    </recommendedName>
</protein>
<evidence type="ECO:0000250" key="1"/>
<evidence type="ECO:0000269" key="2">
    <source>
    </source>
</evidence>
<evidence type="ECO:0000305" key="3"/>
<proteinExistence type="evidence at protein level"/>
<keyword id="KW-0903">Direct protein sequencing</keyword>
<keyword id="KW-1015">Disulfide bond</keyword>
<keyword id="KW-0964">Secreted</keyword>
<dbReference type="SMR" id="P0DKT9"/>
<dbReference type="GO" id="GO:0005576">
    <property type="term" value="C:extracellular region"/>
    <property type="evidence" value="ECO:0007669"/>
    <property type="project" value="UniProtKB-SubCell"/>
</dbReference>
<dbReference type="GO" id="GO:0005509">
    <property type="term" value="F:calcium ion binding"/>
    <property type="evidence" value="ECO:0007669"/>
    <property type="project" value="InterPro"/>
</dbReference>
<dbReference type="GO" id="GO:0004623">
    <property type="term" value="F:phospholipase A2 activity"/>
    <property type="evidence" value="ECO:0007669"/>
    <property type="project" value="InterPro"/>
</dbReference>
<dbReference type="GO" id="GO:0050482">
    <property type="term" value="P:arachidonate secretion"/>
    <property type="evidence" value="ECO:0007669"/>
    <property type="project" value="InterPro"/>
</dbReference>
<dbReference type="GO" id="GO:0016042">
    <property type="term" value="P:lipid catabolic process"/>
    <property type="evidence" value="ECO:0007669"/>
    <property type="project" value="InterPro"/>
</dbReference>
<dbReference type="GO" id="GO:0006644">
    <property type="term" value="P:phospholipid metabolic process"/>
    <property type="evidence" value="ECO:0007669"/>
    <property type="project" value="InterPro"/>
</dbReference>
<dbReference type="Gene3D" id="1.20.90.10">
    <property type="entry name" value="Phospholipase A2 domain"/>
    <property type="match status" value="1"/>
</dbReference>
<dbReference type="InterPro" id="IPR001211">
    <property type="entry name" value="PLipase_A2"/>
</dbReference>
<dbReference type="InterPro" id="IPR016090">
    <property type="entry name" value="PLipase_A2_dom"/>
</dbReference>
<dbReference type="InterPro" id="IPR036444">
    <property type="entry name" value="PLipase_A2_dom_sf"/>
</dbReference>
<dbReference type="Pfam" id="PF00068">
    <property type="entry name" value="Phospholip_A2_1"/>
    <property type="match status" value="1"/>
</dbReference>
<dbReference type="PRINTS" id="PR00389">
    <property type="entry name" value="PHPHLIPASEA2"/>
</dbReference>
<dbReference type="SUPFAM" id="SSF48619">
    <property type="entry name" value="Phospholipase A2, PLA2"/>
    <property type="match status" value="1"/>
</dbReference>
<comment type="function">
    <text evidence="1 2">Heterotrimer: Snake venom phospholipase A2 (PLA2) heterotrimer that acts as a potent presynaptic neurotoxin by blocking synaptic transmission and synaptic vesicle recycling. Enzymatic activity is essential for the neurotoxic effects (PubMed:16135698). May act by binding in a calcium-dependent fashion to neurotonal pentraxin-1 (NPTX1) and neurotonal pentraxin-2 (NPTX2), but not to neuronal pentraxin receptor (NPTXR). Also binds to taipoxin-associated calcium binding protein 49 (RCN2), a protein localized in the lumen of endoplasmic reticulum (By similarity).</text>
</comment>
<comment type="function">
    <text evidence="1 2">Monomer (beta chain): Snake venom phospholipase A2 homolog that is neither toxic nor enzymatically active (PubMed:16135698). Does not bind calcium (By similarity).</text>
</comment>
<comment type="subunit">
    <text>Heterotrimer of alpha, beta, and gamma chains; non-covalently linked.</text>
</comment>
<comment type="subcellular location">
    <subcellularLocation>
        <location>Secreted</location>
    </subcellularLocation>
</comment>
<comment type="tissue specificity">
    <text>Expressed by the venom gland.</text>
</comment>
<comment type="mass spectrometry"/>
<comment type="similarity">
    <text evidence="3">Belongs to the phospholipase A2 family. Group I subfamily. D49 sub-subfamily.</text>
</comment>
<accession>P0DKT9</accession>